<protein>
    <recommendedName>
        <fullName evidence="1">DNA mismatch repair protein MutH</fullName>
    </recommendedName>
    <alternativeName>
        <fullName evidence="1">Methyl-directed mismatch repair protein</fullName>
    </alternativeName>
</protein>
<gene>
    <name evidence="1" type="primary">mutH</name>
    <name type="ordered locus">SeAg_B3152</name>
</gene>
<organism>
    <name type="scientific">Salmonella agona (strain SL483)</name>
    <dbReference type="NCBI Taxonomy" id="454166"/>
    <lineage>
        <taxon>Bacteria</taxon>
        <taxon>Pseudomonadati</taxon>
        <taxon>Pseudomonadota</taxon>
        <taxon>Gammaproteobacteria</taxon>
        <taxon>Enterobacterales</taxon>
        <taxon>Enterobacteriaceae</taxon>
        <taxon>Salmonella</taxon>
    </lineage>
</organism>
<reference key="1">
    <citation type="journal article" date="2011" name="J. Bacteriol.">
        <title>Comparative genomics of 28 Salmonella enterica isolates: evidence for CRISPR-mediated adaptive sublineage evolution.</title>
        <authorList>
            <person name="Fricke W.F."/>
            <person name="Mammel M.K."/>
            <person name="McDermott P.F."/>
            <person name="Tartera C."/>
            <person name="White D.G."/>
            <person name="Leclerc J.E."/>
            <person name="Ravel J."/>
            <person name="Cebula T.A."/>
        </authorList>
    </citation>
    <scope>NUCLEOTIDE SEQUENCE [LARGE SCALE GENOMIC DNA]</scope>
    <source>
        <strain>SL483</strain>
    </source>
</reference>
<evidence type="ECO:0000255" key="1">
    <source>
        <dbReference type="HAMAP-Rule" id="MF_00759"/>
    </source>
</evidence>
<accession>B5F4U9</accession>
<feature type="chain" id="PRO_1000133469" description="DNA mismatch repair protein MutH">
    <location>
        <begin position="1"/>
        <end position="231"/>
    </location>
</feature>
<dbReference type="EMBL" id="CP001138">
    <property type="protein sequence ID" value="ACH49449.1"/>
    <property type="molecule type" value="Genomic_DNA"/>
</dbReference>
<dbReference type="RefSeq" id="WP_001274930.1">
    <property type="nucleotide sequence ID" value="NC_011149.1"/>
</dbReference>
<dbReference type="SMR" id="B5F4U9"/>
<dbReference type="KEGG" id="sea:SeAg_B3152"/>
<dbReference type="HOGENOM" id="CLU_086669_0_0_6"/>
<dbReference type="Proteomes" id="UP000008819">
    <property type="component" value="Chromosome"/>
</dbReference>
<dbReference type="GO" id="GO:0005737">
    <property type="term" value="C:cytoplasm"/>
    <property type="evidence" value="ECO:0007669"/>
    <property type="project" value="UniProtKB-SubCell"/>
</dbReference>
<dbReference type="GO" id="GO:0003677">
    <property type="term" value="F:DNA binding"/>
    <property type="evidence" value="ECO:0007669"/>
    <property type="project" value="InterPro"/>
</dbReference>
<dbReference type="GO" id="GO:0004519">
    <property type="term" value="F:endonuclease activity"/>
    <property type="evidence" value="ECO:0007669"/>
    <property type="project" value="UniProtKB-UniRule"/>
</dbReference>
<dbReference type="GO" id="GO:0006304">
    <property type="term" value="P:DNA modification"/>
    <property type="evidence" value="ECO:0007669"/>
    <property type="project" value="InterPro"/>
</dbReference>
<dbReference type="GO" id="GO:0006298">
    <property type="term" value="P:mismatch repair"/>
    <property type="evidence" value="ECO:0007669"/>
    <property type="project" value="UniProtKB-UniRule"/>
</dbReference>
<dbReference type="CDD" id="cd00583">
    <property type="entry name" value="MutH-like"/>
    <property type="match status" value="1"/>
</dbReference>
<dbReference type="FunFam" id="3.40.600.10:FF:000001">
    <property type="entry name" value="DNA mismatch repair protein MutH"/>
    <property type="match status" value="1"/>
</dbReference>
<dbReference type="Gene3D" id="3.40.600.10">
    <property type="entry name" value="DNA mismatch repair MutH/Restriction endonuclease, type II"/>
    <property type="match status" value="1"/>
</dbReference>
<dbReference type="HAMAP" id="MF_00759">
    <property type="entry name" value="MutH"/>
    <property type="match status" value="1"/>
</dbReference>
<dbReference type="InterPro" id="IPR004230">
    <property type="entry name" value="DNA_mismatch_repair_MutH"/>
</dbReference>
<dbReference type="InterPro" id="IPR011337">
    <property type="entry name" value="DNA_rep_MutH/RE_typeII_Sau3AI"/>
</dbReference>
<dbReference type="InterPro" id="IPR037057">
    <property type="entry name" value="DNA_rep_MutH/T2_RE_sf"/>
</dbReference>
<dbReference type="InterPro" id="IPR011335">
    <property type="entry name" value="Restrct_endonuc-II-like"/>
</dbReference>
<dbReference type="NCBIfam" id="TIGR02248">
    <property type="entry name" value="mutH_TIGR"/>
    <property type="match status" value="1"/>
</dbReference>
<dbReference type="NCBIfam" id="NF003458">
    <property type="entry name" value="PRK05070.1"/>
    <property type="match status" value="1"/>
</dbReference>
<dbReference type="Pfam" id="PF02976">
    <property type="entry name" value="MutH"/>
    <property type="match status" value="1"/>
</dbReference>
<dbReference type="SMART" id="SM00927">
    <property type="entry name" value="MutH"/>
    <property type="match status" value="1"/>
</dbReference>
<dbReference type="SUPFAM" id="SSF52980">
    <property type="entry name" value="Restriction endonuclease-like"/>
    <property type="match status" value="1"/>
</dbReference>
<sequence length="231" mass="25410">MSALCPLLTPPASEALLLAQARQLSGYTLGELAAMAGITTPKDLKRDKGWIGVLLEIWLGASAGSKPEQDFAALGVELKTIPVDSLGRPLETTFVCVAPLTGNSGVTWETSHVRHKLKRVLWVPVEGDRSIPLAERRVGSPLLWSPSEEEDRQLRLDWEELMDMIVLGQVERITARHGEVLQLRPKAANARALTEAIGARGEPILTLPRGFYLKKNFTQALLARHFLLQNP</sequence>
<keyword id="KW-0963">Cytoplasm</keyword>
<keyword id="KW-0227">DNA damage</keyword>
<keyword id="KW-0234">DNA repair</keyword>
<keyword id="KW-0255">Endonuclease</keyword>
<keyword id="KW-0378">Hydrolase</keyword>
<keyword id="KW-0540">Nuclease</keyword>
<proteinExistence type="inferred from homology"/>
<name>MUTH_SALA4</name>
<comment type="function">
    <text evidence="1">Sequence-specific endonuclease that cleaves unmethylated GATC sequences. It is involved in DNA mismatch repair.</text>
</comment>
<comment type="subcellular location">
    <subcellularLocation>
        <location evidence="1">Cytoplasm</location>
    </subcellularLocation>
</comment>
<comment type="similarity">
    <text evidence="1">Belongs to the MutH family.</text>
</comment>